<geneLocation type="mitochondrion"/>
<feature type="chain" id="PRO_0000254687" description="Cytochrome b">
    <location>
        <begin position="1"/>
        <end position="379"/>
    </location>
</feature>
<feature type="transmembrane region" description="Helical" evidence="2">
    <location>
        <begin position="33"/>
        <end position="53"/>
    </location>
</feature>
<feature type="transmembrane region" description="Helical" evidence="2">
    <location>
        <begin position="77"/>
        <end position="98"/>
    </location>
</feature>
<feature type="transmembrane region" description="Helical" evidence="2">
    <location>
        <begin position="113"/>
        <end position="133"/>
    </location>
</feature>
<feature type="transmembrane region" description="Helical" evidence="2">
    <location>
        <begin position="178"/>
        <end position="198"/>
    </location>
</feature>
<feature type="transmembrane region" description="Helical" evidence="2">
    <location>
        <begin position="226"/>
        <end position="246"/>
    </location>
</feature>
<feature type="transmembrane region" description="Helical" evidence="2">
    <location>
        <begin position="288"/>
        <end position="308"/>
    </location>
</feature>
<feature type="transmembrane region" description="Helical" evidence="2">
    <location>
        <begin position="320"/>
        <end position="340"/>
    </location>
</feature>
<feature type="transmembrane region" description="Helical" evidence="2">
    <location>
        <begin position="347"/>
        <end position="367"/>
    </location>
</feature>
<feature type="binding site" description="axial binding residue" evidence="2">
    <location>
        <position position="83"/>
    </location>
    <ligand>
        <name>heme b</name>
        <dbReference type="ChEBI" id="CHEBI:60344"/>
        <label>b562</label>
    </ligand>
    <ligandPart>
        <name>Fe</name>
        <dbReference type="ChEBI" id="CHEBI:18248"/>
    </ligandPart>
</feature>
<feature type="binding site" description="axial binding residue" evidence="2">
    <location>
        <position position="97"/>
    </location>
    <ligand>
        <name>heme b</name>
        <dbReference type="ChEBI" id="CHEBI:60344"/>
        <label>b566</label>
    </ligand>
    <ligandPart>
        <name>Fe</name>
        <dbReference type="ChEBI" id="CHEBI:18248"/>
    </ligandPart>
</feature>
<feature type="binding site" description="axial binding residue" evidence="2">
    <location>
        <position position="182"/>
    </location>
    <ligand>
        <name>heme b</name>
        <dbReference type="ChEBI" id="CHEBI:60344"/>
        <label>b562</label>
    </ligand>
    <ligandPart>
        <name>Fe</name>
        <dbReference type="ChEBI" id="CHEBI:18248"/>
    </ligandPart>
</feature>
<feature type="binding site" description="axial binding residue" evidence="2">
    <location>
        <position position="196"/>
    </location>
    <ligand>
        <name>heme b</name>
        <dbReference type="ChEBI" id="CHEBI:60344"/>
        <label>b566</label>
    </ligand>
    <ligandPart>
        <name>Fe</name>
        <dbReference type="ChEBI" id="CHEBI:18248"/>
    </ligandPart>
</feature>
<feature type="binding site" evidence="2">
    <location>
        <position position="201"/>
    </location>
    <ligand>
        <name>a ubiquinone</name>
        <dbReference type="ChEBI" id="CHEBI:16389"/>
    </ligand>
</feature>
<dbReference type="EMBL" id="AY321634">
    <property type="protein sequence ID" value="AAQ83995.1"/>
    <property type="molecule type" value="Genomic_DNA"/>
</dbReference>
<dbReference type="SMR" id="Q4VWH9"/>
<dbReference type="GO" id="GO:0005743">
    <property type="term" value="C:mitochondrial inner membrane"/>
    <property type="evidence" value="ECO:0007669"/>
    <property type="project" value="UniProtKB-SubCell"/>
</dbReference>
<dbReference type="GO" id="GO:0045275">
    <property type="term" value="C:respiratory chain complex III"/>
    <property type="evidence" value="ECO:0007669"/>
    <property type="project" value="InterPro"/>
</dbReference>
<dbReference type="GO" id="GO:0046872">
    <property type="term" value="F:metal ion binding"/>
    <property type="evidence" value="ECO:0007669"/>
    <property type="project" value="UniProtKB-KW"/>
</dbReference>
<dbReference type="GO" id="GO:0008121">
    <property type="term" value="F:ubiquinol-cytochrome-c reductase activity"/>
    <property type="evidence" value="ECO:0007669"/>
    <property type="project" value="InterPro"/>
</dbReference>
<dbReference type="GO" id="GO:0006122">
    <property type="term" value="P:mitochondrial electron transport, ubiquinol to cytochrome c"/>
    <property type="evidence" value="ECO:0007669"/>
    <property type="project" value="TreeGrafter"/>
</dbReference>
<dbReference type="CDD" id="cd00290">
    <property type="entry name" value="cytochrome_b_C"/>
    <property type="match status" value="1"/>
</dbReference>
<dbReference type="CDD" id="cd00284">
    <property type="entry name" value="Cytochrome_b_N"/>
    <property type="match status" value="1"/>
</dbReference>
<dbReference type="FunFam" id="1.20.810.10:FF:000002">
    <property type="entry name" value="Cytochrome b"/>
    <property type="match status" value="1"/>
</dbReference>
<dbReference type="Gene3D" id="1.20.810.10">
    <property type="entry name" value="Cytochrome Bc1 Complex, Chain C"/>
    <property type="match status" value="1"/>
</dbReference>
<dbReference type="InterPro" id="IPR005798">
    <property type="entry name" value="Cyt_b/b6_C"/>
</dbReference>
<dbReference type="InterPro" id="IPR036150">
    <property type="entry name" value="Cyt_b/b6_C_sf"/>
</dbReference>
<dbReference type="InterPro" id="IPR005797">
    <property type="entry name" value="Cyt_b/b6_N"/>
</dbReference>
<dbReference type="InterPro" id="IPR027387">
    <property type="entry name" value="Cytb/b6-like_sf"/>
</dbReference>
<dbReference type="InterPro" id="IPR030689">
    <property type="entry name" value="Cytochrome_b"/>
</dbReference>
<dbReference type="InterPro" id="IPR048260">
    <property type="entry name" value="Cytochrome_b_C_euk/bac"/>
</dbReference>
<dbReference type="InterPro" id="IPR048259">
    <property type="entry name" value="Cytochrome_b_N_euk/bac"/>
</dbReference>
<dbReference type="InterPro" id="IPR016174">
    <property type="entry name" value="Di-haem_cyt_TM"/>
</dbReference>
<dbReference type="PANTHER" id="PTHR19271">
    <property type="entry name" value="CYTOCHROME B"/>
    <property type="match status" value="1"/>
</dbReference>
<dbReference type="PANTHER" id="PTHR19271:SF16">
    <property type="entry name" value="CYTOCHROME B"/>
    <property type="match status" value="1"/>
</dbReference>
<dbReference type="Pfam" id="PF00032">
    <property type="entry name" value="Cytochrom_B_C"/>
    <property type="match status" value="1"/>
</dbReference>
<dbReference type="Pfam" id="PF00033">
    <property type="entry name" value="Cytochrome_B"/>
    <property type="match status" value="1"/>
</dbReference>
<dbReference type="PIRSF" id="PIRSF038885">
    <property type="entry name" value="COB"/>
    <property type="match status" value="1"/>
</dbReference>
<dbReference type="SUPFAM" id="SSF81648">
    <property type="entry name" value="a domain/subunit of cytochrome bc1 complex (Ubiquinol-cytochrome c reductase)"/>
    <property type="match status" value="1"/>
</dbReference>
<dbReference type="SUPFAM" id="SSF81342">
    <property type="entry name" value="Transmembrane di-heme cytochromes"/>
    <property type="match status" value="1"/>
</dbReference>
<dbReference type="PROSITE" id="PS51003">
    <property type="entry name" value="CYTB_CTER"/>
    <property type="match status" value="1"/>
</dbReference>
<dbReference type="PROSITE" id="PS51002">
    <property type="entry name" value="CYTB_NTER"/>
    <property type="match status" value="1"/>
</dbReference>
<sequence length="379" mass="42689">MANIRKKHPVLKIINHSFIDLPAPSNISSWWNFGSLLGMCLILQIITGLFLAMHYTADTTTAFSSVTHICRDVNYGWMIRYLHANGASMFFMCQFLHVGRGLYYGSYTYLETWNICVILLFATMATAFMGYVLPWGQMSFWGATVITNLLSAIPYIGTDLVEWIWGGFSVDKATLTRFSAFHFIHSFIITALVNVHLLFLHETGSNNPLGINSDADKIPFHPYYTIKDILGVVGLLAVLSSLVLFAPDLLGDPDNYTPANPLNTPPHIKPEWYFLFANAILRSIPNKLAGVLALVMSILILTLVPFLHTSKQRSMTCRPISQCLFWILVADLLTLTWIGGQPVEHPFIIIGRVASVLYFTIIIIFMPLAGWLENYLMNW</sequence>
<reference key="1">
    <citation type="submission" date="2003-06" db="EMBL/GenBank/DDBJ databases">
        <title>Phylogenetic diversification and taxonomic status of the Tupaia glis species complex based on cytochrome-b sequence variation.</title>
        <authorList>
            <person name="Han K.H."/>
            <person name="Sheldon F.H."/>
            <person name="Stuebing R.B."/>
        </authorList>
    </citation>
    <scope>NUCLEOTIDE SEQUENCE [GENOMIC DNA]</scope>
    <source>
        <strain>Isolate Den1129</strain>
    </source>
</reference>
<gene>
    <name type="primary">MT-CYB</name>
    <name type="synonym">COB</name>
    <name type="synonym">CYTB</name>
    <name type="synonym">MTCYB</name>
</gene>
<organism>
    <name type="scientific">Dendrogale melanura</name>
    <name type="common">Bornean smooth-tailed tree shrew</name>
    <dbReference type="NCBI Taxonomy" id="246553"/>
    <lineage>
        <taxon>Eukaryota</taxon>
        <taxon>Metazoa</taxon>
        <taxon>Chordata</taxon>
        <taxon>Craniata</taxon>
        <taxon>Vertebrata</taxon>
        <taxon>Euteleostomi</taxon>
        <taxon>Mammalia</taxon>
        <taxon>Eutheria</taxon>
        <taxon>Euarchontoglires</taxon>
        <taxon>Scandentia</taxon>
        <taxon>Tupaiidae</taxon>
        <taxon>Dendrogale</taxon>
    </lineage>
</organism>
<protein>
    <recommendedName>
        <fullName>Cytochrome b</fullName>
    </recommendedName>
    <alternativeName>
        <fullName>Complex III subunit 3</fullName>
    </alternativeName>
    <alternativeName>
        <fullName>Complex III subunit III</fullName>
    </alternativeName>
    <alternativeName>
        <fullName>Cytochrome b-c1 complex subunit 3</fullName>
    </alternativeName>
    <alternativeName>
        <fullName>Ubiquinol-cytochrome-c reductase complex cytochrome b subunit</fullName>
    </alternativeName>
</protein>
<name>CYB_DENME</name>
<proteinExistence type="inferred from homology"/>
<accession>Q4VWH9</accession>
<evidence type="ECO:0000250" key="1"/>
<evidence type="ECO:0000250" key="2">
    <source>
        <dbReference type="UniProtKB" id="P00157"/>
    </source>
</evidence>
<evidence type="ECO:0000255" key="3">
    <source>
        <dbReference type="PROSITE-ProRule" id="PRU00967"/>
    </source>
</evidence>
<evidence type="ECO:0000255" key="4">
    <source>
        <dbReference type="PROSITE-ProRule" id="PRU00968"/>
    </source>
</evidence>
<comment type="function">
    <text evidence="2">Component of the ubiquinol-cytochrome c reductase complex (complex III or cytochrome b-c1 complex) that is part of the mitochondrial respiratory chain. The b-c1 complex mediates electron transfer from ubiquinol to cytochrome c. Contributes to the generation of a proton gradient across the mitochondrial membrane that is then used for ATP synthesis.</text>
</comment>
<comment type="cofactor">
    <cofactor evidence="2">
        <name>heme b</name>
        <dbReference type="ChEBI" id="CHEBI:60344"/>
    </cofactor>
    <text evidence="2">Binds 2 heme b groups non-covalently.</text>
</comment>
<comment type="subunit">
    <text evidence="2">The cytochrome bc1 complex contains 11 subunits: 3 respiratory subunits (MT-CYB, CYC1 and UQCRFS1), 2 core proteins (UQCRC1 and UQCRC2) and 6 low-molecular weight proteins (UQCRH/QCR6, UQCRB/QCR7, UQCRQ/QCR8, UQCR10/QCR9, UQCR11/QCR10 and a cleavage product of UQCRFS1). This cytochrome bc1 complex then forms a dimer.</text>
</comment>
<comment type="subcellular location">
    <subcellularLocation>
        <location evidence="2">Mitochondrion inner membrane</location>
        <topology evidence="2">Multi-pass membrane protein</topology>
    </subcellularLocation>
</comment>
<comment type="miscellaneous">
    <text evidence="1">Heme 1 (or BL or b562) is low-potential and absorbs at about 562 nm, and heme 2 (or BH or b566) is high-potential and absorbs at about 566 nm.</text>
</comment>
<comment type="similarity">
    <text evidence="3 4">Belongs to the cytochrome b family.</text>
</comment>
<comment type="caution">
    <text evidence="2">The full-length protein contains only eight transmembrane helices, not nine as predicted by bioinformatics tools.</text>
</comment>
<keyword id="KW-0249">Electron transport</keyword>
<keyword id="KW-0349">Heme</keyword>
<keyword id="KW-0408">Iron</keyword>
<keyword id="KW-0472">Membrane</keyword>
<keyword id="KW-0479">Metal-binding</keyword>
<keyword id="KW-0496">Mitochondrion</keyword>
<keyword id="KW-0999">Mitochondrion inner membrane</keyword>
<keyword id="KW-0679">Respiratory chain</keyword>
<keyword id="KW-0812">Transmembrane</keyword>
<keyword id="KW-1133">Transmembrane helix</keyword>
<keyword id="KW-0813">Transport</keyword>
<keyword id="KW-0830">Ubiquinone</keyword>